<gene>
    <name evidence="1" type="primary">hisG</name>
    <name type="ordered locus">BMEA_B0189</name>
</gene>
<protein>
    <recommendedName>
        <fullName evidence="1">ATP phosphoribosyltransferase</fullName>
        <shortName evidence="1">ATP-PRT</shortName>
        <shortName evidence="1">ATP-PRTase</shortName>
        <ecNumber evidence="1">2.4.2.17</ecNumber>
    </recommendedName>
</protein>
<reference key="1">
    <citation type="submission" date="2009-03" db="EMBL/GenBank/DDBJ databases">
        <title>Brucella melitensis ATCC 23457 whole genome shotgun sequencing project.</title>
        <authorList>
            <person name="Setubal J.C."/>
            <person name="Boyle S."/>
            <person name="Crasta O.R."/>
            <person name="Gillespie J.J."/>
            <person name="Kenyon R.W."/>
            <person name="Lu J."/>
            <person name="Mane S."/>
            <person name="Nagrani S."/>
            <person name="Shallom J.M."/>
            <person name="Shallom S."/>
            <person name="Shukla M."/>
            <person name="Snyder E.E."/>
            <person name="Sobral B.W."/>
            <person name="Wattam A.R."/>
            <person name="Will R."/>
            <person name="Williams K."/>
            <person name="Yoo H."/>
            <person name="Munk C."/>
            <person name="Tapia R."/>
            <person name="Han C."/>
            <person name="Detter J.C."/>
            <person name="Bruce D."/>
            <person name="Brettin T.S."/>
        </authorList>
    </citation>
    <scope>NUCLEOTIDE SEQUENCE [LARGE SCALE GENOMIC DNA]</scope>
    <source>
        <strain>ATCC 23457</strain>
    </source>
</reference>
<organism>
    <name type="scientific">Brucella melitensis biotype 2 (strain ATCC 23457)</name>
    <dbReference type="NCBI Taxonomy" id="546272"/>
    <lineage>
        <taxon>Bacteria</taxon>
        <taxon>Pseudomonadati</taxon>
        <taxon>Pseudomonadota</taxon>
        <taxon>Alphaproteobacteria</taxon>
        <taxon>Hyphomicrobiales</taxon>
        <taxon>Brucellaceae</taxon>
        <taxon>Brucella/Ochrobactrum group</taxon>
        <taxon>Brucella</taxon>
    </lineage>
</organism>
<proteinExistence type="inferred from homology"/>
<evidence type="ECO:0000255" key="1">
    <source>
        <dbReference type="HAMAP-Rule" id="MF_01018"/>
    </source>
</evidence>
<keyword id="KW-0028">Amino-acid biosynthesis</keyword>
<keyword id="KW-0067">ATP-binding</keyword>
<keyword id="KW-0963">Cytoplasm</keyword>
<keyword id="KW-0328">Glycosyltransferase</keyword>
<keyword id="KW-0368">Histidine biosynthesis</keyword>
<keyword id="KW-0547">Nucleotide-binding</keyword>
<keyword id="KW-0808">Transferase</keyword>
<accession>C0RKC9</accession>
<feature type="chain" id="PRO_1000213257" description="ATP phosphoribosyltransferase">
    <location>
        <begin position="1"/>
        <end position="231"/>
    </location>
</feature>
<comment type="function">
    <text evidence="1">Catalyzes the condensation of ATP and 5-phosphoribose 1-diphosphate to form N'-(5'-phosphoribosyl)-ATP (PR-ATP). Has a crucial role in the pathway because the rate of histidine biosynthesis seems to be controlled primarily by regulation of HisG enzymatic activity.</text>
</comment>
<comment type="catalytic activity">
    <reaction evidence="1">
        <text>1-(5-phospho-beta-D-ribosyl)-ATP + diphosphate = 5-phospho-alpha-D-ribose 1-diphosphate + ATP</text>
        <dbReference type="Rhea" id="RHEA:18473"/>
        <dbReference type="ChEBI" id="CHEBI:30616"/>
        <dbReference type="ChEBI" id="CHEBI:33019"/>
        <dbReference type="ChEBI" id="CHEBI:58017"/>
        <dbReference type="ChEBI" id="CHEBI:73183"/>
        <dbReference type="EC" id="2.4.2.17"/>
    </reaction>
</comment>
<comment type="pathway">
    <text evidence="1">Amino-acid biosynthesis; L-histidine biosynthesis; L-histidine from 5-phospho-alpha-D-ribose 1-diphosphate: step 1/9.</text>
</comment>
<comment type="subunit">
    <text evidence="1">Heteromultimer composed of HisG and HisZ subunits.</text>
</comment>
<comment type="subcellular location">
    <subcellularLocation>
        <location evidence="1">Cytoplasm</location>
    </subcellularLocation>
</comment>
<comment type="domain">
    <text>Lacks the C-terminal regulatory region which is replaced by HisZ.</text>
</comment>
<comment type="similarity">
    <text evidence="1">Belongs to the ATP phosphoribosyltransferase family. Short subfamily.</text>
</comment>
<dbReference type="EC" id="2.4.2.17" evidence="1"/>
<dbReference type="EMBL" id="CP001489">
    <property type="protein sequence ID" value="ACO02062.1"/>
    <property type="molecule type" value="Genomic_DNA"/>
</dbReference>
<dbReference type="RefSeq" id="WP_004681430.1">
    <property type="nucleotide sequence ID" value="NC_012442.1"/>
</dbReference>
<dbReference type="SMR" id="C0RKC9"/>
<dbReference type="KEGG" id="bmi:BMEA_B0189"/>
<dbReference type="HOGENOM" id="CLU_038115_0_1_5"/>
<dbReference type="UniPathway" id="UPA00031">
    <property type="reaction ID" value="UER00006"/>
</dbReference>
<dbReference type="Proteomes" id="UP000001748">
    <property type="component" value="Chromosome II"/>
</dbReference>
<dbReference type="GO" id="GO:0005737">
    <property type="term" value="C:cytoplasm"/>
    <property type="evidence" value="ECO:0007669"/>
    <property type="project" value="UniProtKB-SubCell"/>
</dbReference>
<dbReference type="GO" id="GO:0005524">
    <property type="term" value="F:ATP binding"/>
    <property type="evidence" value="ECO:0007669"/>
    <property type="project" value="UniProtKB-KW"/>
</dbReference>
<dbReference type="GO" id="GO:0003879">
    <property type="term" value="F:ATP phosphoribosyltransferase activity"/>
    <property type="evidence" value="ECO:0007669"/>
    <property type="project" value="UniProtKB-UniRule"/>
</dbReference>
<dbReference type="GO" id="GO:0000105">
    <property type="term" value="P:L-histidine biosynthetic process"/>
    <property type="evidence" value="ECO:0007669"/>
    <property type="project" value="UniProtKB-UniRule"/>
</dbReference>
<dbReference type="CDD" id="cd13593">
    <property type="entry name" value="PBP2_HisGL3"/>
    <property type="match status" value="1"/>
</dbReference>
<dbReference type="Gene3D" id="3.40.190.10">
    <property type="entry name" value="Periplasmic binding protein-like II"/>
    <property type="match status" value="2"/>
</dbReference>
<dbReference type="HAMAP" id="MF_01018">
    <property type="entry name" value="HisG_Short"/>
    <property type="match status" value="1"/>
</dbReference>
<dbReference type="InterPro" id="IPR013820">
    <property type="entry name" value="ATP_PRibTrfase_cat"/>
</dbReference>
<dbReference type="InterPro" id="IPR018198">
    <property type="entry name" value="ATP_PRibTrfase_CS"/>
</dbReference>
<dbReference type="InterPro" id="IPR001348">
    <property type="entry name" value="ATP_PRibTrfase_HisG"/>
</dbReference>
<dbReference type="InterPro" id="IPR024893">
    <property type="entry name" value="ATP_PRibTrfase_HisG_short"/>
</dbReference>
<dbReference type="NCBIfam" id="TIGR00070">
    <property type="entry name" value="hisG"/>
    <property type="match status" value="1"/>
</dbReference>
<dbReference type="PANTHER" id="PTHR21403:SF8">
    <property type="entry name" value="ATP PHOSPHORIBOSYLTRANSFERASE"/>
    <property type="match status" value="1"/>
</dbReference>
<dbReference type="PANTHER" id="PTHR21403">
    <property type="entry name" value="ATP PHOSPHORIBOSYLTRANSFERASE ATP-PRTASE"/>
    <property type="match status" value="1"/>
</dbReference>
<dbReference type="Pfam" id="PF01634">
    <property type="entry name" value="HisG"/>
    <property type="match status" value="1"/>
</dbReference>
<dbReference type="SUPFAM" id="SSF53850">
    <property type="entry name" value="Periplasmic binding protein-like II"/>
    <property type="match status" value="1"/>
</dbReference>
<dbReference type="PROSITE" id="PS01316">
    <property type="entry name" value="ATP_P_PHORIBOSYLTR"/>
    <property type="match status" value="1"/>
</dbReference>
<name>HIS1_BRUMB</name>
<sequence>MSVTLALPSKGRLKEKTLAVLEKAGYKVVLPDDDRNYRARVEGEDDLDILFLSASEIARKLGYGSVDLGVTGEDLVRETLAHADERVAIEAQLGFGHADVVVAVPEVWRDVTTMADLDDVAADFRQRHGRRLRIATKYWRLTQQFFSQKHGIQVYRIVESLGATEGAPAAGSADMIVDITSTGSTLRANRLKVLEDGIILRSQACLVSARRSHTSRRVEEIAARIRAGLEI</sequence>